<evidence type="ECO:0000255" key="1">
    <source>
        <dbReference type="HAMAP-Rule" id="MF_00388"/>
    </source>
</evidence>
<dbReference type="EC" id="3.5.1.108" evidence="1"/>
<dbReference type="EMBL" id="CP000783">
    <property type="protein sequence ID" value="ABU78464.1"/>
    <property type="molecule type" value="Genomic_DNA"/>
</dbReference>
<dbReference type="RefSeq" id="WP_004388392.1">
    <property type="nucleotide sequence ID" value="NC_009778.1"/>
</dbReference>
<dbReference type="SMR" id="A7MQ65"/>
<dbReference type="GeneID" id="92214320"/>
<dbReference type="KEGG" id="esa:ESA_03242"/>
<dbReference type="HOGENOM" id="CLU_046528_1_0_6"/>
<dbReference type="UniPathway" id="UPA00359">
    <property type="reaction ID" value="UER00478"/>
</dbReference>
<dbReference type="Proteomes" id="UP000000260">
    <property type="component" value="Chromosome"/>
</dbReference>
<dbReference type="GO" id="GO:0016020">
    <property type="term" value="C:membrane"/>
    <property type="evidence" value="ECO:0007669"/>
    <property type="project" value="GOC"/>
</dbReference>
<dbReference type="GO" id="GO:0046872">
    <property type="term" value="F:metal ion binding"/>
    <property type="evidence" value="ECO:0007669"/>
    <property type="project" value="UniProtKB-KW"/>
</dbReference>
<dbReference type="GO" id="GO:0103117">
    <property type="term" value="F:UDP-3-O-acyl-N-acetylglucosamine deacetylase activity"/>
    <property type="evidence" value="ECO:0007669"/>
    <property type="project" value="UniProtKB-UniRule"/>
</dbReference>
<dbReference type="GO" id="GO:0009245">
    <property type="term" value="P:lipid A biosynthetic process"/>
    <property type="evidence" value="ECO:0007669"/>
    <property type="project" value="UniProtKB-UniRule"/>
</dbReference>
<dbReference type="FunFam" id="3.30.1700.10:FF:000001">
    <property type="entry name" value="UDP-3-O-acyl-N-acetylglucosamine deacetylase"/>
    <property type="match status" value="1"/>
</dbReference>
<dbReference type="FunFam" id="3.30.230.20:FF:000001">
    <property type="entry name" value="UDP-3-O-acyl-N-acetylglucosamine deacetylase"/>
    <property type="match status" value="1"/>
</dbReference>
<dbReference type="Gene3D" id="3.30.230.20">
    <property type="entry name" value="lpxc deacetylase, domain 1"/>
    <property type="match status" value="1"/>
</dbReference>
<dbReference type="Gene3D" id="3.30.1700.10">
    <property type="entry name" value="lpxc deacetylase, domain 2"/>
    <property type="match status" value="1"/>
</dbReference>
<dbReference type="HAMAP" id="MF_00388">
    <property type="entry name" value="LpxC"/>
    <property type="match status" value="1"/>
</dbReference>
<dbReference type="InterPro" id="IPR020568">
    <property type="entry name" value="Ribosomal_Su5_D2-typ_SF"/>
</dbReference>
<dbReference type="InterPro" id="IPR004463">
    <property type="entry name" value="UDP-acyl_GlcNac_deAcase"/>
</dbReference>
<dbReference type="InterPro" id="IPR011334">
    <property type="entry name" value="UDP-acyl_GlcNac_deAcase_C"/>
</dbReference>
<dbReference type="InterPro" id="IPR015870">
    <property type="entry name" value="UDP-acyl_N-AcGlcN_deAcase_N"/>
</dbReference>
<dbReference type="NCBIfam" id="TIGR00325">
    <property type="entry name" value="lpxC"/>
    <property type="match status" value="1"/>
</dbReference>
<dbReference type="PANTHER" id="PTHR33694">
    <property type="entry name" value="UDP-3-O-ACYL-N-ACETYLGLUCOSAMINE DEACETYLASE 1, MITOCHONDRIAL-RELATED"/>
    <property type="match status" value="1"/>
</dbReference>
<dbReference type="PANTHER" id="PTHR33694:SF1">
    <property type="entry name" value="UDP-3-O-ACYL-N-ACETYLGLUCOSAMINE DEACETYLASE 1, MITOCHONDRIAL-RELATED"/>
    <property type="match status" value="1"/>
</dbReference>
<dbReference type="Pfam" id="PF03331">
    <property type="entry name" value="LpxC"/>
    <property type="match status" value="1"/>
</dbReference>
<dbReference type="SUPFAM" id="SSF54211">
    <property type="entry name" value="Ribosomal protein S5 domain 2-like"/>
    <property type="match status" value="2"/>
</dbReference>
<protein>
    <recommendedName>
        <fullName evidence="1">UDP-3-O-acyl-N-acetylglucosamine deacetylase</fullName>
        <shortName evidence="1">UDP-3-O-acyl-GlcNAc deacetylase</shortName>
        <ecNumber evidence="1">3.5.1.108</ecNumber>
    </recommendedName>
    <alternativeName>
        <fullName evidence="1">UDP-3-O-[R-3-hydroxymyristoyl]-N-acetylglucosamine deacetylase</fullName>
    </alternativeName>
</protein>
<name>LPXC_CROS8</name>
<reference key="1">
    <citation type="journal article" date="2010" name="PLoS ONE">
        <title>Genome sequence of Cronobacter sakazakii BAA-894 and comparative genomic hybridization analysis with other Cronobacter species.</title>
        <authorList>
            <person name="Kucerova E."/>
            <person name="Clifton S.W."/>
            <person name="Xia X.Q."/>
            <person name="Long F."/>
            <person name="Porwollik S."/>
            <person name="Fulton L."/>
            <person name="Fronick C."/>
            <person name="Minx P."/>
            <person name="Kyung K."/>
            <person name="Warren W."/>
            <person name="Fulton R."/>
            <person name="Feng D."/>
            <person name="Wollam A."/>
            <person name="Shah N."/>
            <person name="Bhonagiri V."/>
            <person name="Nash W.E."/>
            <person name="Hallsworth-Pepin K."/>
            <person name="Wilson R.K."/>
            <person name="McClelland M."/>
            <person name="Forsythe S.J."/>
        </authorList>
    </citation>
    <scope>NUCLEOTIDE SEQUENCE [LARGE SCALE GENOMIC DNA]</scope>
    <source>
        <strain>ATCC BAA-894</strain>
    </source>
</reference>
<feature type="chain" id="PRO_1000013206" description="UDP-3-O-acyl-N-acetylglucosamine deacetylase">
    <location>
        <begin position="1"/>
        <end position="305"/>
    </location>
</feature>
<feature type="active site" description="Proton donor" evidence="1">
    <location>
        <position position="265"/>
    </location>
</feature>
<feature type="binding site" evidence="1">
    <location>
        <position position="79"/>
    </location>
    <ligand>
        <name>Zn(2+)</name>
        <dbReference type="ChEBI" id="CHEBI:29105"/>
    </ligand>
</feature>
<feature type="binding site" evidence="1">
    <location>
        <position position="238"/>
    </location>
    <ligand>
        <name>Zn(2+)</name>
        <dbReference type="ChEBI" id="CHEBI:29105"/>
    </ligand>
</feature>
<feature type="binding site" evidence="1">
    <location>
        <position position="242"/>
    </location>
    <ligand>
        <name>Zn(2+)</name>
        <dbReference type="ChEBI" id="CHEBI:29105"/>
    </ligand>
</feature>
<organism>
    <name type="scientific">Cronobacter sakazakii (strain ATCC BAA-894)</name>
    <name type="common">Enterobacter sakazakii</name>
    <dbReference type="NCBI Taxonomy" id="290339"/>
    <lineage>
        <taxon>Bacteria</taxon>
        <taxon>Pseudomonadati</taxon>
        <taxon>Pseudomonadota</taxon>
        <taxon>Gammaproteobacteria</taxon>
        <taxon>Enterobacterales</taxon>
        <taxon>Enterobacteriaceae</taxon>
        <taxon>Cronobacter</taxon>
    </lineage>
</organism>
<sequence length="305" mass="34028">MIKQRTLKRIVQATGVGLHTGKKVTLTLRPAPANTGVIYRRTDLNPPVDFPADAKSVRDTMLCTCLVNEHDVRISTVEHLNAALAGLGIDNIIVEVDAPEIPIMDGSAAPFVYLLVDAGIDELNVAKKFVRIKETVRVEDGDKWAEFKPYNGFSLDFTIDFNHPAIDASNQRYCMNFSADAFMRQISRARTFGFMRDIEYLQSRGLCLGGSFDCAIVVDDYRVLNEDGLRFEDEFVRHKMLDAIGDLFMCGHNIIGAFTAYKSGHALNNKLLQAVLAKQEAWEYVTYEDEAELPLAFKAPSLVLA</sequence>
<accession>A7MQ65</accession>
<comment type="function">
    <text evidence="1">Catalyzes the hydrolysis of UDP-3-O-myristoyl-N-acetylglucosamine to form UDP-3-O-myristoylglucosamine and acetate, the committed step in lipid A biosynthesis.</text>
</comment>
<comment type="catalytic activity">
    <reaction evidence="1">
        <text>a UDP-3-O-[(3R)-3-hydroxyacyl]-N-acetyl-alpha-D-glucosamine + H2O = a UDP-3-O-[(3R)-3-hydroxyacyl]-alpha-D-glucosamine + acetate</text>
        <dbReference type="Rhea" id="RHEA:67816"/>
        <dbReference type="ChEBI" id="CHEBI:15377"/>
        <dbReference type="ChEBI" id="CHEBI:30089"/>
        <dbReference type="ChEBI" id="CHEBI:137740"/>
        <dbReference type="ChEBI" id="CHEBI:173225"/>
        <dbReference type="EC" id="3.5.1.108"/>
    </reaction>
</comment>
<comment type="cofactor">
    <cofactor evidence="1">
        <name>Zn(2+)</name>
        <dbReference type="ChEBI" id="CHEBI:29105"/>
    </cofactor>
</comment>
<comment type="pathway">
    <text evidence="1">Glycolipid biosynthesis; lipid IV(A) biosynthesis; lipid IV(A) from (3R)-3-hydroxytetradecanoyl-[acyl-carrier-protein] and UDP-N-acetyl-alpha-D-glucosamine: step 2/6.</text>
</comment>
<comment type="similarity">
    <text evidence="1">Belongs to the LpxC family.</text>
</comment>
<keyword id="KW-0378">Hydrolase</keyword>
<keyword id="KW-0441">Lipid A biosynthesis</keyword>
<keyword id="KW-0444">Lipid biosynthesis</keyword>
<keyword id="KW-0443">Lipid metabolism</keyword>
<keyword id="KW-0479">Metal-binding</keyword>
<keyword id="KW-1185">Reference proteome</keyword>
<keyword id="KW-0862">Zinc</keyword>
<proteinExistence type="inferred from homology"/>
<gene>
    <name evidence="1" type="primary">lpxC</name>
    <name type="ordered locus">ESA_03242</name>
</gene>